<feature type="signal peptide" evidence="3">
    <location>
        <begin position="1"/>
        <end position="21"/>
    </location>
</feature>
<feature type="chain" id="PRO_0000045482" description="Izumo sperm-egg fusion protein 1">
    <location>
        <begin position="22"/>
        <end position="350"/>
    </location>
</feature>
<feature type="topological domain" description="Extracellular" evidence="3">
    <location>
        <begin position="22"/>
        <end position="292"/>
    </location>
</feature>
<feature type="transmembrane region" description="Helical" evidence="3">
    <location>
        <begin position="293"/>
        <end position="313"/>
    </location>
</feature>
<feature type="topological domain" description="Cytoplasmic" evidence="3">
    <location>
        <begin position="314"/>
        <end position="350"/>
    </location>
</feature>
<feature type="domain" description="Ig-like C2-type" evidence="4">
    <location>
        <begin position="167"/>
        <end position="251"/>
    </location>
</feature>
<feature type="region of interest" description="Important for interaction with IZUMO1R" evidence="9">
    <location>
        <begin position="148"/>
        <end position="160"/>
    </location>
</feature>
<feature type="modified residue" description="Phosphoserine" evidence="1">
    <location>
        <position position="325"/>
    </location>
</feature>
<feature type="glycosylation site" description="N-linked (GlcNAc...) asparagine" evidence="3">
    <location>
        <position position="204"/>
    </location>
</feature>
<feature type="disulfide bond" evidence="8 9 17 18 19 20 21 22 23">
    <location>
        <begin position="22"/>
        <end position="149"/>
    </location>
</feature>
<feature type="disulfide bond" evidence="8 9 17 18 19 20 21 22 23">
    <location>
        <begin position="25"/>
        <end position="152"/>
    </location>
</feature>
<feature type="disulfide bond" evidence="8 9 17 18 19 20 21 22 23">
    <location>
        <begin position="135"/>
        <end position="159"/>
    </location>
</feature>
<feature type="disulfide bond" evidence="8 9 17 18 19 20 21 22 23">
    <location>
        <begin position="139"/>
        <end position="165"/>
    </location>
</feature>
<feature type="disulfide bond" evidence="4 8 9 17 18 19 20 21 22 23">
    <location>
        <begin position="182"/>
        <end position="233"/>
    </location>
</feature>
<feature type="splice variant" id="VSP_016960" description="In isoform 3." evidence="13">
    <original>VENAVKDFQELS</original>
    <variation>MRPHCKRGPGVC</variation>
    <location>
        <begin position="57"/>
        <end position="68"/>
    </location>
</feature>
<feature type="splice variant" id="VSP_016961" description="In isoform 3." evidence="13">
    <location>
        <begin position="69"/>
        <end position="350"/>
    </location>
</feature>
<feature type="splice variant" id="VSP_016962" description="In isoform 2." evidence="13">
    <original>ERNVEVPQMEDMILDCELNWHQASEGLT</original>
    <variation>GERTGPSRRNWCRAECGSSSNGRHDPGL</variation>
    <location>
        <begin position="167"/>
        <end position="194"/>
    </location>
</feature>
<feature type="splice variant" id="VSP_016963" description="In isoform 2." evidence="13">
    <location>
        <begin position="195"/>
        <end position="350"/>
    </location>
</feature>
<feature type="sequence variant" id="VAR_055399" description="In dbSNP:rs2307019." evidence="5 6 7">
    <original>A</original>
    <variation>V</variation>
    <location>
        <position position="333"/>
    </location>
</feature>
<feature type="mutagenesis site" description="Mildly decreases interaction with IZUMO1R." evidence="9">
    <original>E</original>
    <variation>A</variation>
    <variation>K</variation>
    <location>
        <position position="71"/>
    </location>
</feature>
<feature type="mutagenesis site" description="Abolishes interaction with IZUMO1R." evidence="9">
    <original>W</original>
    <variation>A</variation>
    <location>
        <position position="148"/>
    </location>
</feature>
<feature type="mutagenesis site" description="Nearly abolishes interaction with IZUMO1R." evidence="9">
    <original>H</original>
    <variation>A</variation>
    <location>
        <position position="157"/>
    </location>
</feature>
<feature type="mutagenesis site" description="Nearly abolishes interaction with IZUMO1R." evidence="9">
    <original>R</original>
    <variation>A</variation>
    <variation>E</variation>
    <location>
        <position position="160"/>
    </location>
</feature>
<feature type="sequence conflict" description="In Ref. 2; AAS59145." evidence="14" ref="2">
    <original>L</original>
    <variation>P</variation>
    <location>
        <position position="36"/>
    </location>
</feature>
<feature type="helix" evidence="26">
    <location>
        <begin position="22"/>
        <end position="25"/>
    </location>
</feature>
<feature type="helix" evidence="26">
    <location>
        <begin position="27"/>
        <end position="39"/>
    </location>
</feature>
<feature type="helix" evidence="26">
    <location>
        <begin position="41"/>
        <end position="44"/>
    </location>
</feature>
<feature type="helix" evidence="26">
    <location>
        <begin position="47"/>
        <end position="49"/>
    </location>
</feature>
<feature type="helix" evidence="26">
    <location>
        <begin position="50"/>
        <end position="62"/>
    </location>
</feature>
<feature type="helix" evidence="24">
    <location>
        <begin position="63"/>
        <end position="65"/>
    </location>
</feature>
<feature type="turn" evidence="26">
    <location>
        <begin position="66"/>
        <end position="69"/>
    </location>
</feature>
<feature type="strand" evidence="26">
    <location>
        <begin position="70"/>
        <end position="72"/>
    </location>
</feature>
<feature type="strand" evidence="26">
    <location>
        <begin position="76"/>
        <end position="78"/>
    </location>
</feature>
<feature type="helix" evidence="26">
    <location>
        <begin position="80"/>
        <end position="99"/>
    </location>
</feature>
<feature type="helix" evidence="26">
    <location>
        <begin position="104"/>
        <end position="132"/>
    </location>
</feature>
<feature type="strand" evidence="26">
    <location>
        <begin position="138"/>
        <end position="148"/>
    </location>
</feature>
<feature type="turn" evidence="26">
    <location>
        <begin position="149"/>
        <end position="151"/>
    </location>
</feature>
<feature type="strand" evidence="26">
    <location>
        <begin position="154"/>
        <end position="160"/>
    </location>
</feature>
<feature type="strand" evidence="25">
    <location>
        <begin position="162"/>
        <end position="164"/>
    </location>
</feature>
<feature type="strand" evidence="26">
    <location>
        <begin position="168"/>
        <end position="173"/>
    </location>
</feature>
<feature type="strand" evidence="26">
    <location>
        <begin position="178"/>
        <end position="181"/>
    </location>
</feature>
<feature type="helix" evidence="26">
    <location>
        <begin position="187"/>
        <end position="189"/>
    </location>
</feature>
<feature type="strand" evidence="26">
    <location>
        <begin position="191"/>
        <end position="201"/>
    </location>
</feature>
<feature type="strand" evidence="24">
    <location>
        <begin position="203"/>
        <end position="205"/>
    </location>
</feature>
<feature type="strand" evidence="26">
    <location>
        <begin position="207"/>
        <end position="214"/>
    </location>
</feature>
<feature type="strand" evidence="26">
    <location>
        <begin position="216"/>
        <end position="222"/>
    </location>
</feature>
<feature type="helix" evidence="26">
    <location>
        <begin position="225"/>
        <end position="227"/>
    </location>
</feature>
<feature type="strand" evidence="26">
    <location>
        <begin position="229"/>
        <end position="241"/>
    </location>
</feature>
<feature type="strand" evidence="26">
    <location>
        <begin position="243"/>
        <end position="253"/>
    </location>
</feature>
<sequence length="350" mass="38930">MGPHFTLLCAALAGCLLPAEGCVICDPSVVLALKSLEKDYLPGHLDAKHHKAMMERVENAVKDFQELSLNEDAYMGVVDEATLQKGSWSLLKDLKRITDSDVKGDLFVKELFWMLHLQKETFATYVARFQKEAYCPNKCGVMLQTLIWCKNCKKEVHACRKSYDCGERNVEVPQMEDMILDCELNWHQASEGLTDYSFYRVWGNNTETLVSKGKEATLTKPMVGPEDAGSYRCELGSVNSSPATIINFHVTVLPKMIKEEKPSPNIVTPGEATTESSISLQPLQPEKMLASRLLGLLICGSLALITGLTFAIFRRRKVIDFIKSSLFGLGSGAAEQTQVPKEKATDSRQQ</sequence>
<evidence type="ECO:0000250" key="1">
    <source>
        <dbReference type="UniProtKB" id="Q6AY06"/>
    </source>
</evidence>
<evidence type="ECO:0000250" key="2">
    <source>
        <dbReference type="UniProtKB" id="Q9D9J7"/>
    </source>
</evidence>
<evidence type="ECO:0000255" key="3"/>
<evidence type="ECO:0000255" key="4">
    <source>
        <dbReference type="PROSITE-ProRule" id="PRU00114"/>
    </source>
</evidence>
<evidence type="ECO:0000269" key="5">
    <source>
    </source>
</evidence>
<evidence type="ECO:0000269" key="6">
    <source>
    </source>
</evidence>
<evidence type="ECO:0000269" key="7">
    <source>
    </source>
</evidence>
<evidence type="ECO:0000269" key="8">
    <source>
    </source>
</evidence>
<evidence type="ECO:0000269" key="9">
    <source>
    </source>
</evidence>
<evidence type="ECO:0000269" key="10">
    <source>
    </source>
</evidence>
<evidence type="ECO:0000269" key="11">
    <source>
    </source>
</evidence>
<evidence type="ECO:0000303" key="12">
    <source>
    </source>
</evidence>
<evidence type="ECO:0000303" key="13">
    <source ref="2"/>
</evidence>
<evidence type="ECO:0000305" key="14"/>
<evidence type="ECO:0000305" key="15">
    <source>
    </source>
</evidence>
<evidence type="ECO:0000312" key="16">
    <source>
        <dbReference type="HGNC" id="HGNC:28539"/>
    </source>
</evidence>
<evidence type="ECO:0007744" key="17">
    <source>
        <dbReference type="PDB" id="5F4E"/>
    </source>
</evidence>
<evidence type="ECO:0007744" key="18">
    <source>
        <dbReference type="PDB" id="5F4T"/>
    </source>
</evidence>
<evidence type="ECO:0007744" key="19">
    <source>
        <dbReference type="PDB" id="5F4V"/>
    </source>
</evidence>
<evidence type="ECO:0007744" key="20">
    <source>
        <dbReference type="PDB" id="5JK9"/>
    </source>
</evidence>
<evidence type="ECO:0007744" key="21">
    <source>
        <dbReference type="PDB" id="5JKC"/>
    </source>
</evidence>
<evidence type="ECO:0007744" key="22">
    <source>
        <dbReference type="PDB" id="5JKD"/>
    </source>
</evidence>
<evidence type="ECO:0007744" key="23">
    <source>
        <dbReference type="PDB" id="5JKE"/>
    </source>
</evidence>
<evidence type="ECO:0007829" key="24">
    <source>
        <dbReference type="PDB" id="5F4E"/>
    </source>
</evidence>
<evidence type="ECO:0007829" key="25">
    <source>
        <dbReference type="PDB" id="5F4T"/>
    </source>
</evidence>
<evidence type="ECO:0007829" key="26">
    <source>
        <dbReference type="PDB" id="5JK9"/>
    </source>
</evidence>
<name>IZUM1_HUMAN</name>
<organism>
    <name type="scientific">Homo sapiens</name>
    <name type="common">Human</name>
    <dbReference type="NCBI Taxonomy" id="9606"/>
    <lineage>
        <taxon>Eukaryota</taxon>
        <taxon>Metazoa</taxon>
        <taxon>Chordata</taxon>
        <taxon>Craniata</taxon>
        <taxon>Vertebrata</taxon>
        <taxon>Euteleostomi</taxon>
        <taxon>Mammalia</taxon>
        <taxon>Eutheria</taxon>
        <taxon>Euarchontoglires</taxon>
        <taxon>Primates</taxon>
        <taxon>Haplorrhini</taxon>
        <taxon>Catarrhini</taxon>
        <taxon>Hominidae</taxon>
        <taxon>Homo</taxon>
    </lineage>
</organism>
<accession>Q8IYV9</accession>
<accession>Q6Q8P6</accession>
<accession>Q6Q8P7</accession>
<comment type="function">
    <text evidence="2 10">Essential sperm cell-surface protein required for fertilization by acting as a ligand for IZUMO1R/JUNO receptor on egg. The IZUMO1:IZUMO1R/JUNO interaction is a necessary adhesion event between sperm and egg that is required for fertilization but is not sufficient for cell fusion. The ligand-receptor interaction probably does not act as a membrane 'fusogen'. Acts a ligand for the human-specific oolemma epitope FCRL3/MAIA during fertilization (PubMed:36070373). FCRL3/MAIA replaces IZUMO1R/JUNO as IZUMO1 receptor after sperm-egg adhesion, which permits species-specific gamete fusion (PubMed:36070373). Plays a critical role in sperm-oolemma binding prior to plasma membrane fusion. Can mediate cell-cell fusion in cultured mammalian cells independently of its binding to IZUMO1R/JUNO (By similarity).</text>
</comment>
<comment type="subunit">
    <text evidence="1 2 8 9 10 11">Monomer, homodimer; disulfide-linked and homooligomer; depending on the context (PubMed:27309808, PubMed:27309818). Interacts with IZUMO1R/JUNO. IZUMO1 and IZUMO1R/JUNO form a complex with 1:1 stoichiometry (PubMed:27309808, PubMed:27309818). In gamete recognition, IZUMO1R/JUNO first binds to monomeric IZUMO1 (By similarity). The weak, but specific interaction with IZUMO1R/JUNO induces IZUMO1 homodimerization (By similarity). The process follows a tight binding phase where IZUMO1 bends the entire structure towards the sperm membrane side through a thiol-disulfide exchange reaction (By similarity). The molecule no longer binds to IZUMO1R/JUNO and instead binds to a putative second oocyte receptor (By similarity). Interacts with ACE3 (By similarity). Part of a oolemmal binding multimeric complex (IZUMO1 complex) composed at least of IZUMO1 and GLIPR1L1; the complex assemblage is influenced by the maturation status of the male germ cell. Interacts with GLIPR1L1. Interacts with FREY; the interaction retains IZUMO1 at the endoplasmic reticulum membrane and coordinates IZUMO1 complex assembly (By similarity). Interacts with FCRL3/MAIA (via extracellular domain); the interaction replaces IZUMO1R/JUNO as IZUMO1 receptor after sperm-egg adhesion (PubMed:36070373). Interacts with WDR54 (By similarity). Forms a complex with SPACA6 and TMEM81 on spermatocyte cell membrane (PubMed:39423812).</text>
</comment>
<comment type="interaction">
    <interactant intactId="EBI-16208297">
        <id>Q8IYV9-1</id>
    </interactant>
    <interactant intactId="EBI-16208297">
        <id>Q8IYV9-1</id>
        <label>IZUMO1</label>
    </interactant>
    <organismsDiffer>false</organismsDiffer>
    <experiments>2</experiments>
</comment>
<comment type="interaction">
    <interactant intactId="EBI-16208297">
        <id>Q8IYV9-1</id>
    </interactant>
    <interactant intactId="EBI-16208304">
        <id>A6ND01-1</id>
        <label>IZUMO1R</label>
    </interactant>
    <organismsDiffer>false</organismsDiffer>
    <experiments>13</experiments>
</comment>
<comment type="subcellular location">
    <subcellularLocation>
        <location evidence="6">Cell membrane</location>
        <topology evidence="3">Single-pass type I membrane protein</topology>
    </subcellularLocation>
    <subcellularLocation>
        <location evidence="10">Cytoplasmic vesicle</location>
        <location evidence="10">Secretory vesicle</location>
        <location evidence="10">Acrosome membrane</location>
        <topology evidence="3">Single-pass type I membrane protein</topology>
    </subcellularLocation>
    <text evidence="6 10">Localizes initially to the acrosome membrane of the sperm head (both outer and inner acrosomal membranes) (PubMed:36070373). During the acrosome reaction, translocates to the plasma membrane (PubMed:15759005, PubMed:36070373).</text>
</comment>
<comment type="alternative products">
    <event type="alternative splicing"/>
    <isoform>
        <id>Q8IYV9-1</id>
        <name>1</name>
        <sequence type="displayed"/>
    </isoform>
    <isoform>
        <id>Q8IYV9-2</id>
        <name>2</name>
        <sequence type="described" ref="VSP_016962 VSP_016963"/>
    </isoform>
    <isoform>
        <id>Q8IYV9-3</id>
        <name>3</name>
        <sequence type="described" ref="VSP_016960 VSP_016961"/>
    </isoform>
</comment>
<comment type="tissue specificity">
    <text evidence="6 10">Sperm-specific (at protein level) (PubMed:15759005, PubMed:36070373). Detectable on sperm surface only after the acrosome reaction (PubMed:15759005, PubMed:36070373).</text>
</comment>
<comment type="domain">
    <text evidence="9">The extracellular domain assumes a distinct boomerang shape when not bound to IZUMO1R/JUNO (PubMed:27309818). Interaction with IZUMO1R/JUNO triggers a conformation change, so that the IZUMO1 extracellular domain assumes an upright conformation (PubMed:27309818).</text>
</comment>
<comment type="domain">
    <text evidence="2">The cytoplasmic C-terminus region is not essential for fertilization. It is however required for protein stability.</text>
</comment>
<comment type="PTM">
    <text evidence="2">N-glycosylated. Glycosylation is not essential for fusion and for proper protein trafficking in sperm.</text>
</comment>
<comment type="PTM">
    <text evidence="2">Phosphorylated. The cytoplasmic C-terminus is phosphorylated and undergoes phosphorylation changes during epididymal transit.</text>
</comment>
<comment type="miscellaneous">
    <text evidence="15">Izumo is the name of a Japanese shrine to marriage.</text>
</comment>
<comment type="similarity">
    <text evidence="14">Belongs to the Izumo family.</text>
</comment>
<reference key="1">
    <citation type="journal article" date="2005" name="Nature">
        <title>The immunoglobulin superfamily protein Izumo is required for sperm to fuse with eggs.</title>
        <authorList>
            <person name="Inoue N."/>
            <person name="Ikawa M."/>
            <person name="Isotani A."/>
            <person name="Okabe M."/>
        </authorList>
    </citation>
    <scope>NUCLEOTIDE SEQUENCE [MRNA] (ISOFORM 1)</scope>
    <scope>FUNCTION</scope>
    <scope>SUBCELLULAR LOCATION</scope>
    <scope>TISSUE SPECIFICITY</scope>
    <scope>VARIANT VAL-333</scope>
    <source>
        <tissue>Testis</tissue>
    </source>
</reference>
<reference key="2">
    <citation type="submission" date="2004-02" db="EMBL/GenBank/DDBJ databases">
        <authorList>
            <person name="Li H."/>
            <person name="Zhou G."/>
            <person name="Shen C."/>
            <person name="Ke R."/>
            <person name="Zhong G."/>
            <person name="Lin L."/>
            <person name="Yang S."/>
        </authorList>
    </citation>
    <scope>NUCLEOTIDE SEQUENCE [LARGE SCALE MRNA] (ISOFORMS 2 AND 3)</scope>
</reference>
<reference key="3">
    <citation type="journal article" date="2004" name="Nature">
        <title>The DNA sequence and biology of human chromosome 19.</title>
        <authorList>
            <person name="Grimwood J."/>
            <person name="Gordon L.A."/>
            <person name="Olsen A.S."/>
            <person name="Terry A."/>
            <person name="Schmutz J."/>
            <person name="Lamerdin J.E."/>
            <person name="Hellsten U."/>
            <person name="Goodstein D."/>
            <person name="Couronne O."/>
            <person name="Tran-Gyamfi M."/>
            <person name="Aerts A."/>
            <person name="Altherr M."/>
            <person name="Ashworth L."/>
            <person name="Bajorek E."/>
            <person name="Black S."/>
            <person name="Branscomb E."/>
            <person name="Caenepeel S."/>
            <person name="Carrano A.V."/>
            <person name="Caoile C."/>
            <person name="Chan Y.M."/>
            <person name="Christensen M."/>
            <person name="Cleland C.A."/>
            <person name="Copeland A."/>
            <person name="Dalin E."/>
            <person name="Dehal P."/>
            <person name="Denys M."/>
            <person name="Detter J.C."/>
            <person name="Escobar J."/>
            <person name="Flowers D."/>
            <person name="Fotopulos D."/>
            <person name="Garcia C."/>
            <person name="Georgescu A.M."/>
            <person name="Glavina T."/>
            <person name="Gomez M."/>
            <person name="Gonzales E."/>
            <person name="Groza M."/>
            <person name="Hammon N."/>
            <person name="Hawkins T."/>
            <person name="Haydu L."/>
            <person name="Ho I."/>
            <person name="Huang W."/>
            <person name="Israni S."/>
            <person name="Jett J."/>
            <person name="Kadner K."/>
            <person name="Kimball H."/>
            <person name="Kobayashi A."/>
            <person name="Larionov V."/>
            <person name="Leem S.-H."/>
            <person name="Lopez F."/>
            <person name="Lou Y."/>
            <person name="Lowry S."/>
            <person name="Malfatti S."/>
            <person name="Martinez D."/>
            <person name="McCready P.M."/>
            <person name="Medina C."/>
            <person name="Morgan J."/>
            <person name="Nelson K."/>
            <person name="Nolan M."/>
            <person name="Ovcharenko I."/>
            <person name="Pitluck S."/>
            <person name="Pollard M."/>
            <person name="Popkie A.P."/>
            <person name="Predki P."/>
            <person name="Quan G."/>
            <person name="Ramirez L."/>
            <person name="Rash S."/>
            <person name="Retterer J."/>
            <person name="Rodriguez A."/>
            <person name="Rogers S."/>
            <person name="Salamov A."/>
            <person name="Salazar A."/>
            <person name="She X."/>
            <person name="Smith D."/>
            <person name="Slezak T."/>
            <person name="Solovyev V."/>
            <person name="Thayer N."/>
            <person name="Tice H."/>
            <person name="Tsai M."/>
            <person name="Ustaszewska A."/>
            <person name="Vo N."/>
            <person name="Wagner M."/>
            <person name="Wheeler J."/>
            <person name="Wu K."/>
            <person name="Xie G."/>
            <person name="Yang J."/>
            <person name="Dubchak I."/>
            <person name="Furey T.S."/>
            <person name="DeJong P."/>
            <person name="Dickson M."/>
            <person name="Gordon D."/>
            <person name="Eichler E.E."/>
            <person name="Pennacchio L.A."/>
            <person name="Richardson P."/>
            <person name="Stubbs L."/>
            <person name="Rokhsar D.S."/>
            <person name="Myers R.M."/>
            <person name="Rubin E.M."/>
            <person name="Lucas S.M."/>
        </authorList>
    </citation>
    <scope>NUCLEOTIDE SEQUENCE [LARGE SCALE GENOMIC DNA]</scope>
</reference>
<reference key="4">
    <citation type="journal article" date="2004" name="Genome Res.">
        <title>The status, quality, and expansion of the NIH full-length cDNA project: the Mammalian Gene Collection (MGC).</title>
        <authorList>
            <consortium name="The MGC Project Team"/>
        </authorList>
    </citation>
    <scope>NUCLEOTIDE SEQUENCE [LARGE SCALE MRNA] (ISOFORM 1)</scope>
    <scope>VARIANT VAL-333</scope>
    <source>
        <tissue>Brain</tissue>
    </source>
</reference>
<reference key="5">
    <citation type="journal article" date="2022" name="Sci. Adv.">
        <title>MAIA, Fc receptor-like 3, supersedes JUNO as IZUMO1 receptor during human fertilization.</title>
        <authorList>
            <person name="Vondrakova J."/>
            <person name="Frolikova M."/>
            <person name="Ded L."/>
            <person name="Cerny J."/>
            <person name="Postlerova P."/>
            <person name="Palenikova V."/>
            <person name="Simonik O."/>
            <person name="Nahacka Z."/>
            <person name="Basus K."/>
            <person name="Valaskova E."/>
            <person name="Machan R."/>
            <person name="Pacey A."/>
            <person name="Holubcova Z."/>
            <person name="Koubek P."/>
            <person name="Ezrova Z."/>
            <person name="Park S."/>
            <person name="Liu R."/>
            <person name="Partha R."/>
            <person name="Clark N."/>
            <person name="Neuzil J."/>
            <person name="Ikawa M."/>
            <person name="Erickson K."/>
            <person name="Lam K.S."/>
            <person name="Moore H."/>
            <person name="Komrskova K."/>
        </authorList>
    </citation>
    <scope>FUNCTION</scope>
    <scope>INTERACTION WITH FCRL3/MAIA</scope>
    <scope>SUBCELLULAR LOCATION</scope>
    <scope>TISSUE SPECIFICITY</scope>
</reference>
<reference key="6">
    <citation type="journal article" date="2024" name="Cell">
        <title>A conserved fertilization complex bridges sperm and egg in vertebrates.</title>
        <authorList>
            <person name="Deneke V.E."/>
            <person name="Blaha A."/>
            <person name="Lu Y."/>
            <person name="Suwita J.P."/>
            <person name="Draper J.M."/>
            <person name="Phan C.S."/>
            <person name="Panser K."/>
            <person name="Schleiffer A."/>
            <person name="Jacob L."/>
            <person name="Humer T."/>
            <person name="Stejskal K."/>
            <person name="Krssakova G."/>
            <person name="Roitinger E."/>
            <person name="Handler D."/>
            <person name="Kamoshita M."/>
            <person name="Vance T.D.R."/>
            <person name="Wang X."/>
            <person name="Surm J.M."/>
            <person name="Moran Y."/>
            <person name="Lee J.E."/>
            <person name="Ikawa M."/>
            <person name="Pauli A."/>
        </authorList>
    </citation>
    <scope>INTERACTION WITH TMEM81 AND SPACA6</scope>
</reference>
<reference key="7">
    <citation type="journal article" date="2016" name="Nature">
        <title>Molecular architecture of the human sperm IZUMO1 and egg JUNO fertilization complex.</title>
        <authorList>
            <person name="Aydin H."/>
            <person name="Sultana A."/>
            <person name="Li S."/>
            <person name="Thavalingam A."/>
            <person name="Lee J.E."/>
        </authorList>
    </citation>
    <scope>X-RAY CRYSTALLOGRAPHY (2.40 ANGSTROMS) OF 22-268 IN COMPLEX WITH IZUMO1R</scope>
    <scope>INTERACTION WITH IZUMO1R</scope>
    <scope>SUBUNIT</scope>
    <scope>DOMAIN</scope>
    <scope>DISULFIDE BONDS</scope>
    <scope>MUTAGENESIS OF GLU-71; TRP-148; HIS-157 AND ARG-160</scope>
</reference>
<reference key="8">
    <citation type="journal article" date="2016" name="Nature">
        <title>Structure of IZUMO1-JUNO reveals sperm-oocyte recognition during mammalian fertilization.</title>
        <authorList>
            <person name="Ohto U."/>
            <person name="Ishida H."/>
            <person name="Krayukhina E."/>
            <person name="Uchiyama S."/>
            <person name="Inoue N."/>
            <person name="Shimizu T."/>
        </authorList>
    </citation>
    <scope>X-RAY CRYSTALLOGRAPHY (2.10 ANGSTROMS) OF 22-255 IN COMPLEX WITH IZUMO1R</scope>
    <scope>INTERACTION WITH IZUMO1R</scope>
    <scope>SUBUNIT</scope>
    <scope>DISULFIDE BONDS</scope>
    <scope>MUTAGENESIS OF TRP-148</scope>
</reference>
<reference key="9">
    <citation type="journal article" date="2008" name="Fertil. Steril.">
        <title>Preliminary study on the role of the human IZUMO gene in oocyte-spermatozoa fusion failure.</title>
        <authorList>
            <person name="Granados-Gonzalez V."/>
            <person name="Aknin-Seifer I."/>
            <person name="Touraine R.-L."/>
            <person name="Chouteau J."/>
            <person name="Wolf J.-P."/>
            <person name="Levy R."/>
        </authorList>
    </citation>
    <scope>VARIANT VAL-333</scope>
</reference>
<keyword id="KW-0002">3D-structure</keyword>
<keyword id="KW-0025">Alternative splicing</keyword>
<keyword id="KW-1003">Cell membrane</keyword>
<keyword id="KW-0968">Cytoplasmic vesicle</keyword>
<keyword id="KW-1015">Disulfide bond</keyword>
<keyword id="KW-0278">Fertilization</keyword>
<keyword id="KW-0325">Glycoprotein</keyword>
<keyword id="KW-0393">Immunoglobulin domain</keyword>
<keyword id="KW-0472">Membrane</keyword>
<keyword id="KW-0597">Phosphoprotein</keyword>
<keyword id="KW-1267">Proteomics identification</keyword>
<keyword id="KW-1185">Reference proteome</keyword>
<keyword id="KW-0732">Signal</keyword>
<keyword id="KW-0812">Transmembrane</keyword>
<keyword id="KW-1133">Transmembrane helix</keyword>
<gene>
    <name evidence="12 16" type="primary">IZUMO1</name>
</gene>
<dbReference type="EMBL" id="AB195682">
    <property type="protein sequence ID" value="BAD91012.1"/>
    <property type="molecule type" value="mRNA"/>
</dbReference>
<dbReference type="EMBL" id="AY552609">
    <property type="protein sequence ID" value="AAS59145.1"/>
    <property type="molecule type" value="mRNA"/>
</dbReference>
<dbReference type="EMBL" id="AY552610">
    <property type="protein sequence ID" value="AAS59146.1"/>
    <property type="molecule type" value="mRNA"/>
</dbReference>
<dbReference type="EMBL" id="AC009002">
    <property type="status" value="NOT_ANNOTATED_CDS"/>
    <property type="molecule type" value="Genomic_DNA"/>
</dbReference>
<dbReference type="EMBL" id="BC034769">
    <property type="protein sequence ID" value="AAH34769.1"/>
    <property type="molecule type" value="mRNA"/>
</dbReference>
<dbReference type="CCDS" id="CCDS12732.1">
    <molecule id="Q8IYV9-1"/>
</dbReference>
<dbReference type="RefSeq" id="NP_001308794.1">
    <property type="nucleotide sequence ID" value="NM_001321865.1"/>
</dbReference>
<dbReference type="RefSeq" id="NP_872381.2">
    <molecule id="Q8IYV9-1"/>
    <property type="nucleotide sequence ID" value="NM_182575.3"/>
</dbReference>
<dbReference type="RefSeq" id="XP_011525114.1">
    <property type="nucleotide sequence ID" value="XM_011526812.2"/>
</dbReference>
<dbReference type="RefSeq" id="XP_011525115.1">
    <property type="nucleotide sequence ID" value="XM_011526813.2"/>
</dbReference>
<dbReference type="PDB" id="5F4E">
    <property type="method" value="X-ray"/>
    <property type="resolution" value="2.40 A"/>
    <property type="chains" value="A=22-254"/>
</dbReference>
<dbReference type="PDB" id="5F4T">
    <property type="method" value="X-ray"/>
    <property type="resolution" value="3.08 A"/>
    <property type="chains" value="A=22-254"/>
</dbReference>
<dbReference type="PDB" id="5F4V">
    <property type="method" value="X-ray"/>
    <property type="resolution" value="2.90 A"/>
    <property type="chains" value="A=22-268"/>
</dbReference>
<dbReference type="PDB" id="5JK9">
    <property type="method" value="X-ray"/>
    <property type="resolution" value="2.10 A"/>
    <property type="chains" value="A/B/C/D/E/F=22-255"/>
</dbReference>
<dbReference type="PDB" id="5JKC">
    <property type="method" value="X-ray"/>
    <property type="resolution" value="2.90 A"/>
    <property type="chains" value="A=22-255"/>
</dbReference>
<dbReference type="PDB" id="5JKD">
    <property type="method" value="X-ray"/>
    <property type="resolution" value="2.90 A"/>
    <property type="chains" value="A=22-255"/>
</dbReference>
<dbReference type="PDB" id="5JKE">
    <property type="method" value="X-ray"/>
    <property type="resolution" value="2.86 A"/>
    <property type="chains" value="A/C=22-255"/>
</dbReference>
<dbReference type="PDBsum" id="5F4E"/>
<dbReference type="PDBsum" id="5F4T"/>
<dbReference type="PDBsum" id="5F4V"/>
<dbReference type="PDBsum" id="5JK9"/>
<dbReference type="PDBsum" id="5JKC"/>
<dbReference type="PDBsum" id="5JKD"/>
<dbReference type="PDBsum" id="5JKE"/>
<dbReference type="SMR" id="Q8IYV9"/>
<dbReference type="BioGRID" id="129843">
    <property type="interactions" value="30"/>
</dbReference>
<dbReference type="CORUM" id="Q8IYV9"/>
<dbReference type="DIP" id="DIP-62033N"/>
<dbReference type="FunCoup" id="Q8IYV9">
    <property type="interactions" value="45"/>
</dbReference>
<dbReference type="IntAct" id="Q8IYV9">
    <property type="interactions" value="29"/>
</dbReference>
<dbReference type="STRING" id="9606.ENSP00000327786"/>
<dbReference type="TCDB" id="8.A.55.1.1">
    <property type="family name" value="the izumo sperm-egg fusion protein 1 (izumo1) family"/>
</dbReference>
<dbReference type="GlyCosmos" id="Q8IYV9">
    <property type="glycosylation" value="1 site, No reported glycans"/>
</dbReference>
<dbReference type="GlyGen" id="Q8IYV9">
    <property type="glycosylation" value="2 sites"/>
</dbReference>
<dbReference type="iPTMnet" id="Q8IYV9"/>
<dbReference type="PhosphoSitePlus" id="Q8IYV9"/>
<dbReference type="BioMuta" id="IZUMO1"/>
<dbReference type="DMDM" id="296434545"/>
<dbReference type="jPOST" id="Q8IYV9"/>
<dbReference type="MassIVE" id="Q8IYV9"/>
<dbReference type="PaxDb" id="9606-ENSP00000327786"/>
<dbReference type="PeptideAtlas" id="Q8IYV9"/>
<dbReference type="ProteomicsDB" id="71246">
    <molecule id="Q8IYV9-1"/>
</dbReference>
<dbReference type="ProteomicsDB" id="71247">
    <molecule id="Q8IYV9-2"/>
</dbReference>
<dbReference type="ProteomicsDB" id="71248">
    <molecule id="Q8IYV9-3"/>
</dbReference>
<dbReference type="ABCD" id="Q8IYV9">
    <property type="antibodies" value="9 sequenced antibodies"/>
</dbReference>
<dbReference type="Antibodypedia" id="31796">
    <property type="antibodies" value="132 antibodies from 23 providers"/>
</dbReference>
<dbReference type="DNASU" id="284359"/>
<dbReference type="Ensembl" id="ENST00000332955.7">
    <molecule id="Q8IYV9-1"/>
    <property type="protein sequence ID" value="ENSP00000327786.2"/>
    <property type="gene ID" value="ENSG00000182264.9"/>
</dbReference>
<dbReference type="Ensembl" id="ENST00000595517.5">
    <molecule id="Q8IYV9-3"/>
    <property type="protein sequence ID" value="ENSP00000471815.1"/>
    <property type="gene ID" value="ENSG00000182264.9"/>
</dbReference>
<dbReference type="Ensembl" id="ENST00000595937.5">
    <molecule id="Q8IYV9-2"/>
    <property type="protein sequence ID" value="ENSP00000470144.1"/>
    <property type="gene ID" value="ENSG00000182264.9"/>
</dbReference>
<dbReference type="GeneID" id="284359"/>
<dbReference type="KEGG" id="hsa:284359"/>
<dbReference type="MANE-Select" id="ENST00000332955.7">
    <property type="protein sequence ID" value="ENSP00000327786.2"/>
    <property type="RefSeq nucleotide sequence ID" value="NM_182575.3"/>
    <property type="RefSeq protein sequence ID" value="NP_872381.2"/>
</dbReference>
<dbReference type="UCSC" id="uc002pkj.3">
    <molecule id="Q8IYV9-1"/>
    <property type="organism name" value="human"/>
</dbReference>
<dbReference type="AGR" id="HGNC:28539"/>
<dbReference type="CTD" id="284359"/>
<dbReference type="DisGeNET" id="284359"/>
<dbReference type="GeneCards" id="IZUMO1"/>
<dbReference type="HGNC" id="HGNC:28539">
    <property type="gene designation" value="IZUMO1"/>
</dbReference>
<dbReference type="HPA" id="ENSG00000182264">
    <property type="expression patterns" value="Tissue enriched (testis)"/>
</dbReference>
<dbReference type="MIM" id="609278">
    <property type="type" value="gene"/>
</dbReference>
<dbReference type="neXtProt" id="NX_Q8IYV9"/>
<dbReference type="OpenTargets" id="ENSG00000182264"/>
<dbReference type="PharmGKB" id="PA142671647"/>
<dbReference type="VEuPathDB" id="HostDB:ENSG00000182264"/>
<dbReference type="eggNOG" id="ENOG502SFD8">
    <property type="taxonomic scope" value="Eukaryota"/>
</dbReference>
<dbReference type="GeneTree" id="ENSGT00390000015014"/>
<dbReference type="HOGENOM" id="CLU_044481_0_0_1"/>
<dbReference type="InParanoid" id="Q8IYV9"/>
<dbReference type="OMA" id="ATIINFH"/>
<dbReference type="OrthoDB" id="9907157at2759"/>
<dbReference type="PAN-GO" id="Q8IYV9">
    <property type="GO annotations" value="8 GO annotations based on evolutionary models"/>
</dbReference>
<dbReference type="PhylomeDB" id="Q8IYV9"/>
<dbReference type="TreeFam" id="TF338356"/>
<dbReference type="PathwayCommons" id="Q8IYV9"/>
<dbReference type="Reactome" id="R-HSA-1300645">
    <property type="pathway name" value="Acrosome Reaction and Sperm:Oocyte Membrane Binding"/>
</dbReference>
<dbReference type="SignaLink" id="Q8IYV9"/>
<dbReference type="BioGRID-ORCS" id="284359">
    <property type="hits" value="14 hits in 1145 CRISPR screens"/>
</dbReference>
<dbReference type="ChiTaRS" id="IZUMO1">
    <property type="organism name" value="human"/>
</dbReference>
<dbReference type="EvolutionaryTrace" id="Q8IYV9"/>
<dbReference type="GenomeRNAi" id="284359"/>
<dbReference type="Pharos" id="Q8IYV9">
    <property type="development level" value="Tbio"/>
</dbReference>
<dbReference type="PRO" id="PR:Q8IYV9"/>
<dbReference type="Proteomes" id="UP000005640">
    <property type="component" value="Chromosome 19"/>
</dbReference>
<dbReference type="RNAct" id="Q8IYV9">
    <property type="molecule type" value="protein"/>
</dbReference>
<dbReference type="Bgee" id="ENSG00000182264">
    <property type="expression patterns" value="Expressed in right testis and 84 other cell types or tissues"/>
</dbReference>
<dbReference type="ExpressionAtlas" id="Q8IYV9">
    <property type="expression patterns" value="baseline and differential"/>
</dbReference>
<dbReference type="GO" id="GO:0002080">
    <property type="term" value="C:acrosomal membrane"/>
    <property type="evidence" value="ECO:0000250"/>
    <property type="project" value="UniProtKB"/>
</dbReference>
<dbReference type="GO" id="GO:0001669">
    <property type="term" value="C:acrosomal vesicle"/>
    <property type="evidence" value="ECO:0000250"/>
    <property type="project" value="UniProtKB"/>
</dbReference>
<dbReference type="GO" id="GO:0005789">
    <property type="term" value="C:endoplasmic reticulum membrane"/>
    <property type="evidence" value="ECO:0000250"/>
    <property type="project" value="UniProtKB"/>
</dbReference>
<dbReference type="GO" id="GO:0016020">
    <property type="term" value="C:membrane"/>
    <property type="evidence" value="ECO:0000314"/>
    <property type="project" value="HGNC-UCL"/>
</dbReference>
<dbReference type="GO" id="GO:0005886">
    <property type="term" value="C:plasma membrane"/>
    <property type="evidence" value="ECO:0000314"/>
    <property type="project" value="UniProt"/>
</dbReference>
<dbReference type="GO" id="GO:0098635">
    <property type="term" value="C:protein complex involved in cell-cell adhesion"/>
    <property type="evidence" value="ECO:0000250"/>
    <property type="project" value="UniProtKB"/>
</dbReference>
<dbReference type="GO" id="GO:0042802">
    <property type="term" value="F:identical protein binding"/>
    <property type="evidence" value="ECO:0000353"/>
    <property type="project" value="IntAct"/>
</dbReference>
<dbReference type="GO" id="GO:0086080">
    <property type="term" value="F:protein binding involved in heterotypic cell-cell adhesion"/>
    <property type="evidence" value="ECO:0000250"/>
    <property type="project" value="UniProtKB"/>
</dbReference>
<dbReference type="GO" id="GO:0042803">
    <property type="term" value="F:protein homodimerization activity"/>
    <property type="evidence" value="ECO:0000250"/>
    <property type="project" value="UniProtKB"/>
</dbReference>
<dbReference type="GO" id="GO:0048018">
    <property type="term" value="F:receptor ligand activity"/>
    <property type="evidence" value="ECO:0000250"/>
    <property type="project" value="UniProt"/>
</dbReference>
<dbReference type="GO" id="GO:0005102">
    <property type="term" value="F:signaling receptor binding"/>
    <property type="evidence" value="ECO:0000353"/>
    <property type="project" value="UniProtKB"/>
</dbReference>
<dbReference type="GO" id="GO:0007339">
    <property type="term" value="P:binding of sperm to zona pellucida"/>
    <property type="evidence" value="ECO:0007669"/>
    <property type="project" value="Ensembl"/>
</dbReference>
<dbReference type="GO" id="GO:0007155">
    <property type="term" value="P:cell adhesion"/>
    <property type="evidence" value="ECO:0000305"/>
    <property type="project" value="HGNC-UCL"/>
</dbReference>
<dbReference type="GO" id="GO:0007342">
    <property type="term" value="P:fusion of sperm to egg plasma membrane involved in single fertilization"/>
    <property type="evidence" value="ECO:0000314"/>
    <property type="project" value="HGNC-UCL"/>
</dbReference>
<dbReference type="GO" id="GO:0034113">
    <property type="term" value="P:heterotypic cell-cell adhesion"/>
    <property type="evidence" value="ECO:0000318"/>
    <property type="project" value="GO_Central"/>
</dbReference>
<dbReference type="GO" id="GO:0035036">
    <property type="term" value="P:sperm-egg recognition"/>
    <property type="evidence" value="ECO:0000314"/>
    <property type="project" value="UniProtKB"/>
</dbReference>
<dbReference type="GO" id="GO:0000768">
    <property type="term" value="P:syncytium formation by plasma membrane fusion"/>
    <property type="evidence" value="ECO:0000250"/>
    <property type="project" value="UniProtKB"/>
</dbReference>
<dbReference type="Gene3D" id="2.60.40.10">
    <property type="entry name" value="Immunoglobulins"/>
    <property type="match status" value="1"/>
</dbReference>
<dbReference type="InterPro" id="IPR036179">
    <property type="entry name" value="Ig-like_dom_sf"/>
</dbReference>
<dbReference type="InterPro" id="IPR013783">
    <property type="entry name" value="Ig-like_fold"/>
</dbReference>
<dbReference type="InterPro" id="IPR029389">
    <property type="entry name" value="IZUMO"/>
</dbReference>
<dbReference type="InterPro" id="IPR032699">
    <property type="entry name" value="Izumo-Ig"/>
</dbReference>
<dbReference type="InterPro" id="IPR032700">
    <property type="entry name" value="IZUMO1"/>
</dbReference>
<dbReference type="PANTHER" id="PTHR35540">
    <property type="entry name" value="IZUMO SPERM-EGG FUSION PROTEIN 1"/>
    <property type="match status" value="1"/>
</dbReference>
<dbReference type="PANTHER" id="PTHR35540:SF1">
    <property type="entry name" value="IZUMO SPERM-EGG FUSION PROTEIN 1"/>
    <property type="match status" value="1"/>
</dbReference>
<dbReference type="Pfam" id="PF15005">
    <property type="entry name" value="IZUMO"/>
    <property type="match status" value="1"/>
</dbReference>
<dbReference type="Pfam" id="PF16706">
    <property type="entry name" value="Izumo-Ig"/>
    <property type="match status" value="1"/>
</dbReference>
<dbReference type="SUPFAM" id="SSF48726">
    <property type="entry name" value="Immunoglobulin"/>
    <property type="match status" value="1"/>
</dbReference>
<protein>
    <recommendedName>
        <fullName evidence="14">Izumo sperm-egg fusion protein 1</fullName>
    </recommendedName>
    <alternativeName>
        <fullName evidence="12">Oocyte binding/fusion factor</fullName>
        <shortName evidence="12">OBF</shortName>
    </alternativeName>
    <alternativeName>
        <fullName evidence="12">Sperm-specific protein izumo</fullName>
    </alternativeName>
</protein>
<proteinExistence type="evidence at protein level"/>